<protein>
    <recommendedName>
        <fullName>Putative defensin-like protein 121</fullName>
    </recommendedName>
    <alternativeName>
        <fullName>Putative low-molecular-weight cysteine-rich protein 55</fullName>
        <shortName>Protein LCR55</shortName>
    </alternativeName>
</protein>
<accession>P82769</accession>
<reference evidence="3" key="1">
    <citation type="journal article" date="2000" name="DNA Res.">
        <title>Structural analysis of Arabidopsis thaliana chromosome 3. II. Sequence features of the 4,251,695 bp regions covered by 90 P1, TAC and BAC clones.</title>
        <authorList>
            <person name="Kaneko T."/>
            <person name="Katoh T."/>
            <person name="Sato S."/>
            <person name="Nakamura Y."/>
            <person name="Asamizu E."/>
            <person name="Tabata S."/>
        </authorList>
    </citation>
    <scope>NUCLEOTIDE SEQUENCE [LARGE SCALE GENOMIC DNA]</scope>
    <source>
        <strain>cv. Columbia</strain>
    </source>
</reference>
<reference key="2">
    <citation type="journal article" date="2017" name="Plant J.">
        <title>Araport11: a complete reannotation of the Arabidopsis thaliana reference genome.</title>
        <authorList>
            <person name="Cheng C.Y."/>
            <person name="Krishnakumar V."/>
            <person name="Chan A.P."/>
            <person name="Thibaud-Nissen F."/>
            <person name="Schobel S."/>
            <person name="Town C.D."/>
        </authorList>
    </citation>
    <scope>GENOME REANNOTATION</scope>
    <source>
        <strain>cv. Columbia</strain>
    </source>
</reference>
<reference evidence="3" key="3">
    <citation type="journal article" date="2001" name="Plant Mol. Biol.">
        <title>Two large Arabidopsis thaliana gene families are homologous to the Brassica gene superfamily that encodes pollen coat proteins and the male component of the self-incompatibility response.</title>
        <authorList>
            <person name="Vanoosthuyse V."/>
            <person name="Miege C."/>
            <person name="Dumas C."/>
            <person name="Cock J.M."/>
        </authorList>
    </citation>
    <scope>IDENTIFICATION</scope>
</reference>
<reference key="4">
    <citation type="journal article" date="2005" name="Plant Physiol.">
        <title>Genome organization of more than 300 defensin-like genes in Arabidopsis.</title>
        <authorList>
            <person name="Silverstein K.A.T."/>
            <person name="Graham M.A."/>
            <person name="Paape T.D."/>
            <person name="VandenBosch K.A."/>
        </authorList>
    </citation>
    <scope>GENE FAMILY</scope>
</reference>
<comment type="subcellular location">
    <subcellularLocation>
        <location evidence="1">Secreted</location>
    </subcellularLocation>
</comment>
<comment type="similarity">
    <text evidence="3">Belongs to the DEFL family.</text>
</comment>
<sequence length="76" mass="8519">MTYKATILAIFMIILVLGIGTKETRGQETCHDLIMKRDCDEATCVNMCQQKWKGSGGSCFQNFNVMSCICNFPCQV</sequence>
<feature type="signal peptide" evidence="2">
    <location>
        <begin position="1"/>
        <end position="26"/>
    </location>
</feature>
<feature type="chain" id="PRO_0000017293" description="Putative defensin-like protein 121">
    <location>
        <begin position="27"/>
        <end position="76"/>
    </location>
</feature>
<feature type="disulfide bond" evidence="1">
    <location>
        <begin position="30"/>
        <end position="74"/>
    </location>
</feature>
<feature type="disulfide bond" evidence="1">
    <location>
        <begin position="39"/>
        <end position="59"/>
    </location>
</feature>
<feature type="disulfide bond" evidence="1">
    <location>
        <begin position="44"/>
        <end position="68"/>
    </location>
</feature>
<feature type="disulfide bond" evidence="1">
    <location>
        <begin position="48"/>
        <end position="70"/>
    </location>
</feature>
<keyword id="KW-0929">Antimicrobial</keyword>
<keyword id="KW-1015">Disulfide bond</keyword>
<keyword id="KW-0295">Fungicide</keyword>
<keyword id="KW-0611">Plant defense</keyword>
<keyword id="KW-1185">Reference proteome</keyword>
<keyword id="KW-0964">Secreted</keyword>
<keyword id="KW-0732">Signal</keyword>
<proteinExistence type="inferred from homology"/>
<organism evidence="3">
    <name type="scientific">Arabidopsis thaliana</name>
    <name type="common">Mouse-ear cress</name>
    <dbReference type="NCBI Taxonomy" id="3702"/>
    <lineage>
        <taxon>Eukaryota</taxon>
        <taxon>Viridiplantae</taxon>
        <taxon>Streptophyta</taxon>
        <taxon>Embryophyta</taxon>
        <taxon>Tracheophyta</taxon>
        <taxon>Spermatophyta</taxon>
        <taxon>Magnoliopsida</taxon>
        <taxon>eudicotyledons</taxon>
        <taxon>Gunneridae</taxon>
        <taxon>Pentapetalae</taxon>
        <taxon>rosids</taxon>
        <taxon>malvids</taxon>
        <taxon>Brassicales</taxon>
        <taxon>Brassicaceae</taxon>
        <taxon>Camelineae</taxon>
        <taxon>Arabidopsis</taxon>
    </lineage>
</organism>
<dbReference type="EMBL" id="AP000604">
    <property type="status" value="NOT_ANNOTATED_CDS"/>
    <property type="molecule type" value="Genomic_DNA"/>
</dbReference>
<dbReference type="EMBL" id="CP002686">
    <property type="protein sequence ID" value="AEE76452.1"/>
    <property type="molecule type" value="Genomic_DNA"/>
</dbReference>
<dbReference type="RefSeq" id="NP_001030737.1">
    <property type="nucleotide sequence ID" value="NM_001035660.1"/>
</dbReference>
<dbReference type="SMR" id="P82769"/>
<dbReference type="STRING" id="3702.P82769"/>
<dbReference type="PaxDb" id="3702-AT3G20997.1"/>
<dbReference type="ProteomicsDB" id="224640"/>
<dbReference type="EnsemblPlants" id="AT3G20997.1">
    <property type="protein sequence ID" value="AT3G20997.1"/>
    <property type="gene ID" value="AT3G20997"/>
</dbReference>
<dbReference type="GeneID" id="3768794"/>
<dbReference type="Gramene" id="AT3G20997.1">
    <property type="protein sequence ID" value="AT3G20997.1"/>
    <property type="gene ID" value="AT3G20997"/>
</dbReference>
<dbReference type="KEGG" id="ath:AT3G20997"/>
<dbReference type="Araport" id="AT3G20997"/>
<dbReference type="TAIR" id="AT3G20997">
    <property type="gene designation" value="LCR55"/>
</dbReference>
<dbReference type="HOGENOM" id="CLU_182511_2_0_1"/>
<dbReference type="InParanoid" id="P82769"/>
<dbReference type="OMA" id="QQKWKGS"/>
<dbReference type="PhylomeDB" id="P82769"/>
<dbReference type="PRO" id="PR:P82769"/>
<dbReference type="Proteomes" id="UP000006548">
    <property type="component" value="Chromosome 3"/>
</dbReference>
<dbReference type="ExpressionAtlas" id="P82769">
    <property type="expression patterns" value="baseline"/>
</dbReference>
<dbReference type="GO" id="GO:0005576">
    <property type="term" value="C:extracellular region"/>
    <property type="evidence" value="ECO:0007669"/>
    <property type="project" value="UniProtKB-SubCell"/>
</dbReference>
<dbReference type="GO" id="GO:0050832">
    <property type="term" value="P:defense response to fungus"/>
    <property type="evidence" value="ECO:0007669"/>
    <property type="project" value="UniProtKB-KW"/>
</dbReference>
<dbReference type="GO" id="GO:0031640">
    <property type="term" value="P:killing of cells of another organism"/>
    <property type="evidence" value="ECO:0007669"/>
    <property type="project" value="UniProtKB-KW"/>
</dbReference>
<dbReference type="InterPro" id="IPR010851">
    <property type="entry name" value="DEFL"/>
</dbReference>
<dbReference type="PANTHER" id="PTHR33830:SF10">
    <property type="entry name" value="DEFENSIN-LIKE PROTEIN 122-RELATED"/>
    <property type="match status" value="1"/>
</dbReference>
<dbReference type="PANTHER" id="PTHR33830">
    <property type="entry name" value="DEFENSIN-LIKE PROTEIN 184-RELATED"/>
    <property type="match status" value="1"/>
</dbReference>
<dbReference type="Pfam" id="PF07333">
    <property type="entry name" value="SLR1-BP"/>
    <property type="match status" value="1"/>
</dbReference>
<gene>
    <name type="primary">LCR55</name>
    <name type="ordered locus">At3g20997</name>
    <name type="ORF">MSA6</name>
</gene>
<name>DF121_ARATH</name>
<evidence type="ECO:0000250" key="1"/>
<evidence type="ECO:0000255" key="2"/>
<evidence type="ECO:0000305" key="3"/>